<organismHost>
    <name type="scientific">Manihot esculenta</name>
    <name type="common">Cassava</name>
    <name type="synonym">Jatropha manihot</name>
    <dbReference type="NCBI Taxonomy" id="3983"/>
</organismHost>
<sequence length="256" mass="29910">MSKRPADIIISTPGSKVRRRLNFDSPYSSRAAVPTVRVTKRQSWTNRPINRKPRWYRMYRSPDVPKGCEGPCKVQSFESRHDVVHIGKVMCISDVTRGIGLTHRVGKRFCVKSIYILGKIWMDENIKTKNHTNSVMFFLVRDRRPVDKPQDFGEVFNMFDNEPSTATVKNMHRDRYQVLRKWHATVTGGQYASKEQALVRRFFRVNNYVVYNQQEAGKYENHTENALMLYMACTHASNPVYATLKIRIYFYDSVSN</sequence>
<protein>
    <recommendedName>
        <fullName>Capsid protein</fullName>
    </recommendedName>
    <alternativeName>
        <fullName>Coat protein</fullName>
        <shortName>CP</shortName>
    </alternativeName>
</protein>
<evidence type="ECO:0000250" key="1"/>
<evidence type="ECO:0000255" key="2"/>
<evidence type="ECO:0000305" key="3"/>
<proteinExistence type="inferred from homology"/>
<accession>Q08583</accession>
<organism>
    <name type="scientific">Indian cassava mosaic virus</name>
    <name type="common">ICMV</name>
    <dbReference type="NCBI Taxonomy" id="31600"/>
    <lineage>
        <taxon>Viruses</taxon>
        <taxon>Monodnaviria</taxon>
        <taxon>Shotokuvirae</taxon>
        <taxon>Cressdnaviricota</taxon>
        <taxon>Repensiviricetes</taxon>
        <taxon>Geplafuvirales</taxon>
        <taxon>Geminiviridae</taxon>
        <taxon>Begomovirus</taxon>
    </lineage>
</organism>
<keyword id="KW-0167">Capsid protein</keyword>
<keyword id="KW-0238">DNA-binding</keyword>
<keyword id="KW-1048">Host nucleus</keyword>
<keyword id="KW-0945">Host-virus interaction</keyword>
<keyword id="KW-0479">Metal-binding</keyword>
<keyword id="KW-1140">T=1 icosahedral capsid protein</keyword>
<keyword id="KW-1163">Viral penetration into host nucleus</keyword>
<keyword id="KW-0946">Virion</keyword>
<keyword id="KW-1160">Virus entry into host cell</keyword>
<keyword id="KW-0862">Zinc</keyword>
<keyword id="KW-0863">Zinc-finger</keyword>
<feature type="chain" id="PRO_0000222183" description="Capsid protein">
    <location>
        <begin position="1"/>
        <end position="256"/>
    </location>
</feature>
<feature type="zinc finger region" evidence="2">
    <location>
        <begin position="68"/>
        <end position="85"/>
    </location>
</feature>
<feature type="short sequence motif" description="Bipartite nuclear localization signal" evidence="2">
    <location>
        <begin position="3"/>
        <end position="20"/>
    </location>
</feature>
<feature type="short sequence motif" description="Nuclear localization signal" evidence="2">
    <location>
        <begin position="40"/>
        <end position="54"/>
    </location>
</feature>
<feature type="short sequence motif" description="Nuclear export signal" evidence="2">
    <location>
        <begin position="101"/>
        <end position="122"/>
    </location>
</feature>
<feature type="short sequence motif" description="Bipartite nuclear localization signal" evidence="2">
    <location>
        <begin position="200"/>
        <end position="247"/>
    </location>
</feature>
<reference key="1">
    <citation type="journal article" date="1993" name="J. Gen. Virol.">
        <title>Nucleotide sequence evidence for the occurrence of three distinct whitefly-transmitted geminiviruses in cassava.</title>
        <authorList>
            <person name="Hong Y.G."/>
            <person name="Robinson D.J."/>
            <person name="Harrison B.D."/>
        </authorList>
    </citation>
    <scope>NUCLEOTIDE SEQUENCE [GENOMIC DNA]</scope>
</reference>
<name>CAPSD_ICMV</name>
<comment type="function">
    <text>Encapsidates the viral DNA into characteristic twinned ('geminate') particles. Binds the genomic viral ssDNA and shuttles it into and out of the cell nucleus. The CP of bipartite geminiviruses is not required for cell-to-cell or systemic movement.</text>
</comment>
<comment type="subunit">
    <text evidence="1">Homomultimer. Binds to single-stranded and double-stranded viral DNA. Interacts (via nuclear localization signals) with host importin alpha-1a (By similarity).</text>
</comment>
<comment type="subcellular location">
    <subcellularLocation>
        <location evidence="3">Virion</location>
    </subcellularLocation>
    <subcellularLocation>
        <location evidence="1">Host nucleus</location>
    </subcellularLocation>
    <text evidence="1">It is actively transported into the host cell nucleus. It may be exported out of the nucleus through a nuclear export signal for cell-to-cell movement and spread (By similarity).</text>
</comment>
<comment type="similarity">
    <text evidence="3">Belongs to the geminiviridae capsid protein family.</text>
</comment>
<gene>
    <name type="ORF">AR1</name>
    <name type="ORF">AV1</name>
</gene>
<dbReference type="EMBL" id="Z24758">
    <property type="protein sequence ID" value="CAA80885.1"/>
    <property type="molecule type" value="Genomic_DNA"/>
</dbReference>
<dbReference type="PIR" id="JQ2326">
    <property type="entry name" value="JQ2326"/>
</dbReference>
<dbReference type="RefSeq" id="NP_047230.1">
    <property type="nucleotide sequence ID" value="NC_001932.1"/>
</dbReference>
<dbReference type="SMR" id="Q08583"/>
<dbReference type="KEGG" id="vg:991056"/>
<dbReference type="OrthoDB" id="5720at10239"/>
<dbReference type="Proteomes" id="UP000007210">
    <property type="component" value="Genome"/>
</dbReference>
<dbReference type="GO" id="GO:0043657">
    <property type="term" value="C:host cell"/>
    <property type="evidence" value="ECO:0007669"/>
    <property type="project" value="GOC"/>
</dbReference>
<dbReference type="GO" id="GO:0042025">
    <property type="term" value="C:host cell nucleus"/>
    <property type="evidence" value="ECO:0007669"/>
    <property type="project" value="UniProtKB-SubCell"/>
</dbReference>
<dbReference type="GO" id="GO:0039615">
    <property type="term" value="C:T=1 icosahedral viral capsid"/>
    <property type="evidence" value="ECO:0007669"/>
    <property type="project" value="UniProtKB-KW"/>
</dbReference>
<dbReference type="GO" id="GO:0003677">
    <property type="term" value="F:DNA binding"/>
    <property type="evidence" value="ECO:0007669"/>
    <property type="project" value="UniProtKB-KW"/>
</dbReference>
<dbReference type="GO" id="GO:0005198">
    <property type="term" value="F:structural molecule activity"/>
    <property type="evidence" value="ECO:0007669"/>
    <property type="project" value="InterPro"/>
</dbReference>
<dbReference type="GO" id="GO:0008270">
    <property type="term" value="F:zinc ion binding"/>
    <property type="evidence" value="ECO:0007669"/>
    <property type="project" value="UniProtKB-KW"/>
</dbReference>
<dbReference type="GO" id="GO:0046718">
    <property type="term" value="P:symbiont entry into host cell"/>
    <property type="evidence" value="ECO:0007669"/>
    <property type="project" value="UniProtKB-KW"/>
</dbReference>
<dbReference type="GO" id="GO:0075732">
    <property type="term" value="P:viral penetration into host nucleus"/>
    <property type="evidence" value="ECO:0007669"/>
    <property type="project" value="UniProtKB-KW"/>
</dbReference>
<dbReference type="Gene3D" id="2.60.120.20">
    <property type="match status" value="1"/>
</dbReference>
<dbReference type="InterPro" id="IPR000650">
    <property type="entry name" value="Gem_coat_AR1"/>
</dbReference>
<dbReference type="InterPro" id="IPR000263">
    <property type="entry name" value="GV_A/BR1_coat"/>
</dbReference>
<dbReference type="InterPro" id="IPR029053">
    <property type="entry name" value="Viral_coat"/>
</dbReference>
<dbReference type="Pfam" id="PF00844">
    <property type="entry name" value="Gemini_coat"/>
    <property type="match status" value="1"/>
</dbReference>
<dbReference type="PRINTS" id="PR00224">
    <property type="entry name" value="GEMCOATAR1"/>
</dbReference>
<dbReference type="PRINTS" id="PR00223">
    <property type="entry name" value="GEMCOATARBR1"/>
</dbReference>